<gene>
    <name evidence="1" type="primary">thiC</name>
    <name type="ordered locus">CCNA_02109</name>
</gene>
<evidence type="ECO:0000255" key="1">
    <source>
        <dbReference type="HAMAP-Rule" id="MF_00089"/>
    </source>
</evidence>
<organism>
    <name type="scientific">Caulobacter vibrioides (strain NA1000 / CB15N)</name>
    <name type="common">Caulobacter crescentus</name>
    <dbReference type="NCBI Taxonomy" id="565050"/>
    <lineage>
        <taxon>Bacteria</taxon>
        <taxon>Pseudomonadati</taxon>
        <taxon>Pseudomonadota</taxon>
        <taxon>Alphaproteobacteria</taxon>
        <taxon>Caulobacterales</taxon>
        <taxon>Caulobacteraceae</taxon>
        <taxon>Caulobacter</taxon>
    </lineage>
</organism>
<comment type="function">
    <text evidence="1">Catalyzes the synthesis of the hydroxymethylpyrimidine phosphate (HMP-P) moiety of thiamine from aminoimidazole ribotide (AIR) in a radical S-adenosyl-L-methionine (SAM)-dependent reaction.</text>
</comment>
<comment type="catalytic activity">
    <reaction evidence="1">
        <text>5-amino-1-(5-phospho-beta-D-ribosyl)imidazole + S-adenosyl-L-methionine = 4-amino-2-methyl-5-(phosphooxymethyl)pyrimidine + CO + 5'-deoxyadenosine + formate + L-methionine + 3 H(+)</text>
        <dbReference type="Rhea" id="RHEA:24840"/>
        <dbReference type="ChEBI" id="CHEBI:15378"/>
        <dbReference type="ChEBI" id="CHEBI:15740"/>
        <dbReference type="ChEBI" id="CHEBI:17245"/>
        <dbReference type="ChEBI" id="CHEBI:17319"/>
        <dbReference type="ChEBI" id="CHEBI:57844"/>
        <dbReference type="ChEBI" id="CHEBI:58354"/>
        <dbReference type="ChEBI" id="CHEBI:59789"/>
        <dbReference type="ChEBI" id="CHEBI:137981"/>
        <dbReference type="EC" id="4.1.99.17"/>
    </reaction>
</comment>
<comment type="cofactor">
    <cofactor evidence="1">
        <name>[4Fe-4S] cluster</name>
        <dbReference type="ChEBI" id="CHEBI:49883"/>
    </cofactor>
    <text evidence="1">Binds 1 [4Fe-4S] cluster per subunit. The cluster is coordinated with 3 cysteines and an exchangeable S-adenosyl-L-methionine.</text>
</comment>
<comment type="pathway">
    <text evidence="1">Cofactor biosynthesis; thiamine diphosphate biosynthesis.</text>
</comment>
<comment type="subunit">
    <text evidence="1">Homodimer.</text>
</comment>
<comment type="similarity">
    <text evidence="1">Belongs to the ThiC family.</text>
</comment>
<sequence length="612" mass="67968">MNIQSTIKAVAETISTGPIPGSRKVYQAGELFPELRVPFREVAVHPSANEPPVTIYDPSGPYSDPAIQIDIEKGLPRTREALVVARGDVEEVADPRQVKPEDNGFAQGKHLAPEFPDTGRKIYRAKPGKLVTQLEYARAGIITAEMEYVAIRENLRREQDRPCVRDGEDFGASIPDFVTPEFVRQEIARGRAIIPANINHGELEPMAIGRNFLVKINANIGNSAVLSTVADEVDKLVWATRWGADTVMDLSTGRNIHNIRDWIIRNSSVPIGTVPIYQALEKVNGVAEDLNWEVFRDTLIEQCEQGVDYFTIHAGVRLPFIPMTAKRVTGIVSRGGSIMAKWCLAHHKENFLYERFDEICEIMRAYDVSFSLGDGLRPGSTADANDEAQFSELRTLGELTKVAWKHGVQVMIEGPGHVAMHKIKANMDEQLKHCHEAPFYTLGPLTTDIAPGYDHITSAIGAAMIGWFGTAMLCYVTPKEHLGLPDRDDVKTGVITYKLAAHAADLAKGHPGAAMWDDAISRARFEFRWEDQFNLGLDPETARKFHDETLPKEAHKTAHFCSMCGPKFCSMKISQEVRDFAAGKAPNSAELGMAEMSEKFREQGSEIYLKTE</sequence>
<accession>B8GX84</accession>
<keyword id="KW-0004">4Fe-4S</keyword>
<keyword id="KW-0408">Iron</keyword>
<keyword id="KW-0411">Iron-sulfur</keyword>
<keyword id="KW-0456">Lyase</keyword>
<keyword id="KW-0479">Metal-binding</keyword>
<keyword id="KW-1185">Reference proteome</keyword>
<keyword id="KW-0949">S-adenosyl-L-methionine</keyword>
<keyword id="KW-0784">Thiamine biosynthesis</keyword>
<keyword id="KW-0862">Zinc</keyword>
<protein>
    <recommendedName>
        <fullName evidence="1">Phosphomethylpyrimidine synthase</fullName>
        <ecNumber evidence="1">4.1.99.17</ecNumber>
    </recommendedName>
    <alternativeName>
        <fullName evidence="1">Hydroxymethylpyrimidine phosphate synthase</fullName>
        <shortName evidence="1">HMP-P synthase</shortName>
        <shortName evidence="1">HMP-phosphate synthase</shortName>
        <shortName evidence="1">HMPP synthase</shortName>
    </alternativeName>
    <alternativeName>
        <fullName evidence="1">Thiamine biosynthesis protein ThiC</fullName>
    </alternativeName>
</protein>
<reference key="1">
    <citation type="journal article" date="2010" name="J. Bacteriol.">
        <title>The genetic basis of laboratory adaptation in Caulobacter crescentus.</title>
        <authorList>
            <person name="Marks M.E."/>
            <person name="Castro-Rojas C.M."/>
            <person name="Teiling C."/>
            <person name="Du L."/>
            <person name="Kapatral V."/>
            <person name="Walunas T.L."/>
            <person name="Crosson S."/>
        </authorList>
    </citation>
    <scope>NUCLEOTIDE SEQUENCE [LARGE SCALE GENOMIC DNA]</scope>
    <source>
        <strain>NA1000 / CB15N</strain>
    </source>
</reference>
<proteinExistence type="inferred from homology"/>
<dbReference type="EC" id="4.1.99.17" evidence="1"/>
<dbReference type="EMBL" id="CP001340">
    <property type="protein sequence ID" value="ACL95574.1"/>
    <property type="molecule type" value="Genomic_DNA"/>
</dbReference>
<dbReference type="RefSeq" id="WP_010919895.1">
    <property type="nucleotide sequence ID" value="NC_011916.1"/>
</dbReference>
<dbReference type="RefSeq" id="YP_002517482.1">
    <property type="nucleotide sequence ID" value="NC_011916.1"/>
</dbReference>
<dbReference type="SMR" id="B8GX84"/>
<dbReference type="GeneID" id="7330415"/>
<dbReference type="KEGG" id="ccs:CCNA_02109"/>
<dbReference type="PATRIC" id="fig|565050.3.peg.2067"/>
<dbReference type="HOGENOM" id="CLU_013181_2_1_5"/>
<dbReference type="OrthoDB" id="9805897at2"/>
<dbReference type="PhylomeDB" id="B8GX84"/>
<dbReference type="UniPathway" id="UPA00060"/>
<dbReference type="Proteomes" id="UP000001364">
    <property type="component" value="Chromosome"/>
</dbReference>
<dbReference type="GO" id="GO:0005829">
    <property type="term" value="C:cytosol"/>
    <property type="evidence" value="ECO:0007669"/>
    <property type="project" value="TreeGrafter"/>
</dbReference>
<dbReference type="GO" id="GO:0051539">
    <property type="term" value="F:4 iron, 4 sulfur cluster binding"/>
    <property type="evidence" value="ECO:0007669"/>
    <property type="project" value="UniProtKB-KW"/>
</dbReference>
<dbReference type="GO" id="GO:0016830">
    <property type="term" value="F:carbon-carbon lyase activity"/>
    <property type="evidence" value="ECO:0007669"/>
    <property type="project" value="InterPro"/>
</dbReference>
<dbReference type="GO" id="GO:0008270">
    <property type="term" value="F:zinc ion binding"/>
    <property type="evidence" value="ECO:0007669"/>
    <property type="project" value="UniProtKB-UniRule"/>
</dbReference>
<dbReference type="GO" id="GO:0009228">
    <property type="term" value="P:thiamine biosynthetic process"/>
    <property type="evidence" value="ECO:0007669"/>
    <property type="project" value="UniProtKB-KW"/>
</dbReference>
<dbReference type="GO" id="GO:0009229">
    <property type="term" value="P:thiamine diphosphate biosynthetic process"/>
    <property type="evidence" value="ECO:0007669"/>
    <property type="project" value="UniProtKB-UniRule"/>
</dbReference>
<dbReference type="FunFam" id="3.20.20.540:FF:000001">
    <property type="entry name" value="Phosphomethylpyrimidine synthase"/>
    <property type="match status" value="1"/>
</dbReference>
<dbReference type="Gene3D" id="6.10.250.620">
    <property type="match status" value="1"/>
</dbReference>
<dbReference type="Gene3D" id="3.20.20.540">
    <property type="entry name" value="Radical SAM ThiC family, central domain"/>
    <property type="match status" value="1"/>
</dbReference>
<dbReference type="HAMAP" id="MF_00089">
    <property type="entry name" value="ThiC"/>
    <property type="match status" value="1"/>
</dbReference>
<dbReference type="InterPro" id="IPR037509">
    <property type="entry name" value="ThiC"/>
</dbReference>
<dbReference type="InterPro" id="IPR025747">
    <property type="entry name" value="ThiC-associated_dom"/>
</dbReference>
<dbReference type="InterPro" id="IPR038521">
    <property type="entry name" value="ThiC/Bza_core_dom"/>
</dbReference>
<dbReference type="InterPro" id="IPR002817">
    <property type="entry name" value="ThiC/BzaA/B"/>
</dbReference>
<dbReference type="NCBIfam" id="NF006763">
    <property type="entry name" value="PRK09284.1"/>
    <property type="match status" value="1"/>
</dbReference>
<dbReference type="NCBIfam" id="NF009895">
    <property type="entry name" value="PRK13352.1"/>
    <property type="match status" value="1"/>
</dbReference>
<dbReference type="NCBIfam" id="TIGR00190">
    <property type="entry name" value="thiC"/>
    <property type="match status" value="1"/>
</dbReference>
<dbReference type="PANTHER" id="PTHR30557:SF1">
    <property type="entry name" value="PHOSPHOMETHYLPYRIMIDINE SYNTHASE, CHLOROPLASTIC"/>
    <property type="match status" value="1"/>
</dbReference>
<dbReference type="PANTHER" id="PTHR30557">
    <property type="entry name" value="THIAMINE BIOSYNTHESIS PROTEIN THIC"/>
    <property type="match status" value="1"/>
</dbReference>
<dbReference type="Pfam" id="PF13667">
    <property type="entry name" value="ThiC-associated"/>
    <property type="match status" value="1"/>
</dbReference>
<dbReference type="Pfam" id="PF01964">
    <property type="entry name" value="ThiC_Rad_SAM"/>
    <property type="match status" value="1"/>
</dbReference>
<dbReference type="SFLD" id="SFLDF00407">
    <property type="entry name" value="phosphomethylpyrimidine_syntha"/>
    <property type="match status" value="1"/>
</dbReference>
<dbReference type="SFLD" id="SFLDG01114">
    <property type="entry name" value="phosphomethylpyrimidine_syntha"/>
    <property type="match status" value="1"/>
</dbReference>
<dbReference type="SFLD" id="SFLDS00113">
    <property type="entry name" value="Radical_SAM_Phosphomethylpyrim"/>
    <property type="match status" value="1"/>
</dbReference>
<feature type="chain" id="PRO_1000118503" description="Phosphomethylpyrimidine synthase">
    <location>
        <begin position="1"/>
        <end position="612"/>
    </location>
</feature>
<feature type="binding site" evidence="1">
    <location>
        <position position="219"/>
    </location>
    <ligand>
        <name>substrate</name>
    </ligand>
</feature>
<feature type="binding site" evidence="1">
    <location>
        <position position="248"/>
    </location>
    <ligand>
        <name>substrate</name>
    </ligand>
</feature>
<feature type="binding site" evidence="1">
    <location>
        <position position="277"/>
    </location>
    <ligand>
        <name>substrate</name>
    </ligand>
</feature>
<feature type="binding site" evidence="1">
    <location>
        <position position="313"/>
    </location>
    <ligand>
        <name>substrate</name>
    </ligand>
</feature>
<feature type="binding site" evidence="1">
    <location>
        <begin position="333"/>
        <end position="335"/>
    </location>
    <ligand>
        <name>substrate</name>
    </ligand>
</feature>
<feature type="binding site" evidence="1">
    <location>
        <begin position="374"/>
        <end position="377"/>
    </location>
    <ligand>
        <name>substrate</name>
    </ligand>
</feature>
<feature type="binding site" evidence="1">
    <location>
        <position position="413"/>
    </location>
    <ligand>
        <name>substrate</name>
    </ligand>
</feature>
<feature type="binding site" evidence="1">
    <location>
        <position position="417"/>
    </location>
    <ligand>
        <name>Zn(2+)</name>
        <dbReference type="ChEBI" id="CHEBI:29105"/>
    </ligand>
</feature>
<feature type="binding site" evidence="1">
    <location>
        <position position="440"/>
    </location>
    <ligand>
        <name>substrate</name>
    </ligand>
</feature>
<feature type="binding site" evidence="1">
    <location>
        <position position="481"/>
    </location>
    <ligand>
        <name>Zn(2+)</name>
        <dbReference type="ChEBI" id="CHEBI:29105"/>
    </ligand>
</feature>
<feature type="binding site" evidence="1">
    <location>
        <position position="561"/>
    </location>
    <ligand>
        <name>[4Fe-4S] cluster</name>
        <dbReference type="ChEBI" id="CHEBI:49883"/>
        <note>4Fe-4S-S-AdoMet</note>
    </ligand>
</feature>
<feature type="binding site" evidence="1">
    <location>
        <position position="564"/>
    </location>
    <ligand>
        <name>[4Fe-4S] cluster</name>
        <dbReference type="ChEBI" id="CHEBI:49883"/>
        <note>4Fe-4S-S-AdoMet</note>
    </ligand>
</feature>
<feature type="binding site" evidence="1">
    <location>
        <position position="569"/>
    </location>
    <ligand>
        <name>[4Fe-4S] cluster</name>
        <dbReference type="ChEBI" id="CHEBI:49883"/>
        <note>4Fe-4S-S-AdoMet</note>
    </ligand>
</feature>
<name>THIC_CAUVN</name>